<gene>
    <name type="primary">CD163</name>
    <name type="synonym">M130</name>
</gene>
<accession>Q2VL90</accession>
<accession>Q2VL89</accession>
<accession>Q8HY22</accession>
<name>C163A_PIG</name>
<organism>
    <name type="scientific">Sus scrofa</name>
    <name type="common">Pig</name>
    <dbReference type="NCBI Taxonomy" id="9823"/>
    <lineage>
        <taxon>Eukaryota</taxon>
        <taxon>Metazoa</taxon>
        <taxon>Chordata</taxon>
        <taxon>Craniata</taxon>
        <taxon>Vertebrata</taxon>
        <taxon>Euteleostomi</taxon>
        <taxon>Mammalia</taxon>
        <taxon>Eutheria</taxon>
        <taxon>Laurasiatheria</taxon>
        <taxon>Artiodactyla</taxon>
        <taxon>Suina</taxon>
        <taxon>Suidae</taxon>
        <taxon>Sus</taxon>
    </lineage>
</organism>
<dbReference type="EMBL" id="DQ067278">
    <property type="protein sequence ID" value="AAZ50616.1"/>
    <property type="molecule type" value="mRNA"/>
</dbReference>
<dbReference type="EMBL" id="DQ067279">
    <property type="protein sequence ID" value="AAZ50617.1"/>
    <property type="molecule type" value="mRNA"/>
</dbReference>
<dbReference type="EMBL" id="AJ311716">
    <property type="protein sequence ID" value="CAC84397.1"/>
    <property type="molecule type" value="mRNA"/>
</dbReference>
<dbReference type="RefSeq" id="NP_999141.1">
    <property type="nucleotide sequence ID" value="NM_213976.1"/>
</dbReference>
<dbReference type="PDB" id="5HRJ">
    <property type="method" value="X-ray"/>
    <property type="resolution" value="1.80 A"/>
    <property type="chains" value="A=477-577"/>
</dbReference>
<dbReference type="PDB" id="5JFB">
    <property type="method" value="X-ray"/>
    <property type="resolution" value="2.00 A"/>
    <property type="chains" value="A=477-577"/>
</dbReference>
<dbReference type="PDB" id="8H7J">
    <property type="method" value="X-ray"/>
    <property type="resolution" value="2.50 A"/>
    <property type="chains" value="A=477-1028"/>
</dbReference>
<dbReference type="PDBsum" id="5HRJ"/>
<dbReference type="PDBsum" id="5JFB"/>
<dbReference type="PDBsum" id="8H7J"/>
<dbReference type="SMR" id="Q2VL90"/>
<dbReference type="FunCoup" id="Q2VL90">
    <property type="interactions" value="185"/>
</dbReference>
<dbReference type="STRING" id="9823.ENSSSCP00000045147"/>
<dbReference type="GlyCosmos" id="Q2VL90">
    <property type="glycosylation" value="3 sites, No reported glycans"/>
</dbReference>
<dbReference type="GlyGen" id="Q2VL90">
    <property type="glycosylation" value="3 sites"/>
</dbReference>
<dbReference type="PeptideAtlas" id="Q2VL90"/>
<dbReference type="GeneID" id="397031"/>
<dbReference type="KEGG" id="ssc:397031"/>
<dbReference type="CTD" id="9332"/>
<dbReference type="InParanoid" id="Q2VL90"/>
<dbReference type="OrthoDB" id="536948at2759"/>
<dbReference type="Proteomes" id="UP000008227">
    <property type="component" value="Unplaced"/>
</dbReference>
<dbReference type="Proteomes" id="UP000314985">
    <property type="component" value="Unplaced"/>
</dbReference>
<dbReference type="Proteomes" id="UP000694570">
    <property type="component" value="Unplaced"/>
</dbReference>
<dbReference type="Proteomes" id="UP000694571">
    <property type="component" value="Unplaced"/>
</dbReference>
<dbReference type="Proteomes" id="UP000694720">
    <property type="component" value="Unplaced"/>
</dbReference>
<dbReference type="Proteomes" id="UP000694722">
    <property type="component" value="Unplaced"/>
</dbReference>
<dbReference type="Proteomes" id="UP000694723">
    <property type="component" value="Unplaced"/>
</dbReference>
<dbReference type="Proteomes" id="UP000694724">
    <property type="component" value="Unplaced"/>
</dbReference>
<dbReference type="Proteomes" id="UP000694725">
    <property type="component" value="Unplaced"/>
</dbReference>
<dbReference type="Proteomes" id="UP000694726">
    <property type="component" value="Unplaced"/>
</dbReference>
<dbReference type="Proteomes" id="UP000694727">
    <property type="component" value="Unplaced"/>
</dbReference>
<dbReference type="Proteomes" id="UP000694728">
    <property type="component" value="Unplaced"/>
</dbReference>
<dbReference type="GO" id="GO:0009897">
    <property type="term" value="C:external side of plasma membrane"/>
    <property type="evidence" value="ECO:0000318"/>
    <property type="project" value="GO_Central"/>
</dbReference>
<dbReference type="GO" id="GO:0005576">
    <property type="term" value="C:extracellular region"/>
    <property type="evidence" value="ECO:0007669"/>
    <property type="project" value="UniProtKB-SubCell"/>
</dbReference>
<dbReference type="GO" id="GO:0001618">
    <property type="term" value="F:virus receptor activity"/>
    <property type="evidence" value="ECO:0007669"/>
    <property type="project" value="UniProtKB-KW"/>
</dbReference>
<dbReference type="GO" id="GO:0006953">
    <property type="term" value="P:acute-phase response"/>
    <property type="evidence" value="ECO:0007669"/>
    <property type="project" value="UniProtKB-KW"/>
</dbReference>
<dbReference type="FunFam" id="3.10.250.10:FF:000012">
    <property type="entry name" value="CD163 molecule like 1"/>
    <property type="match status" value="1"/>
</dbReference>
<dbReference type="FunFam" id="3.10.250.10:FF:000003">
    <property type="entry name" value="Deleted in malignant brain tumors 1"/>
    <property type="match status" value="1"/>
</dbReference>
<dbReference type="FunFam" id="3.10.250.10:FF:000002">
    <property type="entry name" value="Scavenger receptor cysteine-rich type 1 protein M130"/>
    <property type="match status" value="4"/>
</dbReference>
<dbReference type="FunFam" id="3.10.250.10:FF:000004">
    <property type="entry name" value="Scavenger receptor cysteine-rich type 1 protein M130"/>
    <property type="match status" value="2"/>
</dbReference>
<dbReference type="FunFam" id="3.10.250.10:FF:000015">
    <property type="entry name" value="Scavenger receptor cysteine-rich type 1 protein M130"/>
    <property type="match status" value="1"/>
</dbReference>
<dbReference type="Gene3D" id="3.10.250.10">
    <property type="entry name" value="SRCR-like domain"/>
    <property type="match status" value="9"/>
</dbReference>
<dbReference type="InterPro" id="IPR001190">
    <property type="entry name" value="SRCR"/>
</dbReference>
<dbReference type="InterPro" id="IPR036772">
    <property type="entry name" value="SRCR-like_dom_sf"/>
</dbReference>
<dbReference type="PANTHER" id="PTHR48071">
    <property type="entry name" value="SRCR DOMAIN-CONTAINING PROTEIN"/>
    <property type="match status" value="1"/>
</dbReference>
<dbReference type="PANTHER" id="PTHR48071:SF15">
    <property type="entry name" value="SRCR DOMAIN-CONTAINING PROTEIN"/>
    <property type="match status" value="1"/>
</dbReference>
<dbReference type="Pfam" id="PF00530">
    <property type="entry name" value="SRCR"/>
    <property type="match status" value="9"/>
</dbReference>
<dbReference type="PRINTS" id="PR00258">
    <property type="entry name" value="SPERACTRCPTR"/>
</dbReference>
<dbReference type="SMART" id="SM00202">
    <property type="entry name" value="SR"/>
    <property type="match status" value="9"/>
</dbReference>
<dbReference type="SUPFAM" id="SSF56487">
    <property type="entry name" value="SRCR-like"/>
    <property type="match status" value="9"/>
</dbReference>
<dbReference type="PROSITE" id="PS00420">
    <property type="entry name" value="SRCR_1"/>
    <property type="match status" value="3"/>
</dbReference>
<dbReference type="PROSITE" id="PS50287">
    <property type="entry name" value="SRCR_2"/>
    <property type="match status" value="9"/>
</dbReference>
<reference key="1">
    <citation type="submission" date="2005-05" db="EMBL/GenBank/DDBJ databases">
        <title>Scavenger receptor cd163 is a cell permissive factor for infection with porcine reproductive and respiratory syndrome viruses.</title>
        <authorList>
            <person name="Welch S.-K.W."/>
            <person name="Calvert J.G."/>
            <person name="Slade D.E."/>
            <person name="Shields S.L."/>
        </authorList>
    </citation>
    <scope>NUCLEOTIDE SEQUENCE [MRNA] (ISOFORMS 1 AND 2)</scope>
</reference>
<reference key="2">
    <citation type="submission" date="2001-03" db="EMBL/GenBank/DDBJ databases">
        <title>Cloning and characterization of the cDNA coding for the porcine homologous to human CD163 antigen.</title>
        <authorList>
            <person name="Gomez N."/>
            <person name="Ortuno E."/>
            <person name="Alonso F."/>
            <person name="Dominguez J."/>
            <person name="Ezquerra A."/>
        </authorList>
    </citation>
    <scope>NUCLEOTIDE SEQUENCE [MRNA] OF 6-1115 (ISOFORM 1)</scope>
    <source>
        <tissue>Lung</tissue>
    </source>
</reference>
<reference key="3">
    <citation type="journal article" date="2003" name="Arch. Virol.">
        <title>Expression of porcine CD163 on monocytes/macrophages correlates with permissiveness to African swine fever infection.</title>
        <authorList>
            <person name="Sanchez-Torres C."/>
            <person name="Gomez-Puertas P."/>
            <person name="Gomez-del-Moral M."/>
            <person name="Alonso F."/>
            <person name="Escribano J.M."/>
            <person name="Ezquerra A."/>
            <person name="Dominguez J."/>
        </authorList>
    </citation>
    <scope>FUNCTION</scope>
    <scope>TISSUE SPECIFICITY</scope>
</reference>
<reference key="4">
    <citation type="journal article" date="2004" name="Immunobiology">
        <title>In vitro differentiation of porcine blood CD163- and CD163+ monocytes into functional dendritic cells.</title>
        <authorList>
            <person name="Chamorro S."/>
            <person name="Revilla C."/>
            <person name="Gomez N."/>
            <person name="Alvarez B."/>
            <person name="Alonso F."/>
            <person name="Ezquerra A."/>
            <person name="Dominguez J."/>
        </authorList>
    </citation>
    <scope>INDUCTION</scope>
</reference>
<reference key="5">
    <citation type="journal article" date="2010" name="J. Virol.">
        <title>The minor envelope glycoproteins GP2a and GP4 of porcine reproductive and respiratory syndrome virus interact with the receptor CD163.</title>
        <authorList>
            <person name="Das P.B."/>
            <person name="Dinh P.X."/>
            <person name="Ansari I.H."/>
            <person name="de Lima M."/>
            <person name="Osorio F.A."/>
            <person name="Pattnaik A.K."/>
        </authorList>
    </citation>
    <scope>INTERACTION WITH PORCINE REPRODUCTIVE AND RESPIRATORY SYNDROME VIRUS GLYCOPROTEIN 4 AND GLYCOPROTEIN 2A</scope>
</reference>
<keyword id="KW-0002">3D-structure</keyword>
<keyword id="KW-0011">Acute phase</keyword>
<keyword id="KW-0025">Alternative splicing</keyword>
<keyword id="KW-1003">Cell membrane</keyword>
<keyword id="KW-1015">Disulfide bond</keyword>
<keyword id="KW-0325">Glycoprotein</keyword>
<keyword id="KW-1183">Host cell receptor for virus entry</keyword>
<keyword id="KW-0945">Host-virus interaction</keyword>
<keyword id="KW-0395">Inflammatory response</keyword>
<keyword id="KW-0472">Membrane</keyword>
<keyword id="KW-0597">Phosphoprotein</keyword>
<keyword id="KW-0675">Receptor</keyword>
<keyword id="KW-1185">Reference proteome</keyword>
<keyword id="KW-0677">Repeat</keyword>
<keyword id="KW-0964">Secreted</keyword>
<keyword id="KW-0732">Signal</keyword>
<keyword id="KW-0812">Transmembrane</keyword>
<keyword id="KW-1133">Transmembrane helix</keyword>
<sequence>MDKLRMVLHENSGSADFRRCSAHLSSFTFAVVAVLSACLVTSSLGGKDKELRLTGGENKCSGRVEVKVQEEWGTVCNNGWDMDVVSVVCRQLGCPTAIKATGWANFSAGSGRIWMDHVSCRGNESALWDCKHDGWGKHNCTHQQDAGVTCSDGSDLEMGLVNGGNRCLGRIEVKFQGRWGTVCDDNFNINHASVVCKQLECGSAVSFSGSANFGEGSGPIWFDDLVCNGNESALWNCKHEGWGKHNCDHAEDAGVICLNGADLKLRVVDGVTECSGRLEVKFQGEWGTICDDGWDSDDAAVACKQLGCPTAVTAIGRVNASEGTGHIWLDSVSCHGHESALWQCRHHEWGKHYCNHDEDAGVTCSDGSDLELRLKGGGSHCAGTVEVEIQKLVGKVCDRSWGLKEADVVCRQLGCGSALKTSYQVYSKTKATNTWLFVSSCNGNETSLWDCKNWQWGGLSCDHYDEAKITCSAHRKPRLVGGDIPCSGRVEVQHGDTWGTVCDSDFSLEAASVLCRELQCGTVVSLLGGAHFGEGSGQIWAEEFQCEGHESHLSLCPVAPRPDGTCSHSRDVGVVCSRYTQIRLVNGKTPCEGRVELNILGSWGSLCNSHWDMEDAHVLCQQLKCGVALSIPGGAPFGKGSEQVWRHMFHCTGTEKHMGDCSVTALGASLCSSGQVASVICSGNQSQTLSPCNSSSSDPSSSIISEENGVACIGSGQLRLVDGGGRCAGRVEVYHEGSWGTICDDSWDLNDAHVVCKQLSCGWAINATGSAHFGEGTGPIWLDEINCNGKESHIWQCHSHGWGRHNCRHKEDAGVICSEFMSLRLISENSRETCAGRLEVFYNGAWGSVGRNSMSPATVGVVCRQLGCADRGDISPASSDKTVSRHMWVDNVQCPKGPDTLWQCPSSPWKKRLASPSEETWITCANKIRLQEGNTNCSGRVEIWYGGSWGTVCDDSWDLEDAQVVCRQLGCGSALEAGKEAAFGQGTGPIWLNEVKCKGNETSLWDCPARSWGHSDCGHKEDAAVTCSEIAKSRESLHATGRSSFVALAIFGVILLACLIAFLIWTQKRRQRQRLSVFSGGENSVHQIQYREMNSCLKADETDMLNPSGDHSEVQ</sequence>
<feature type="signal peptide" evidence="3">
    <location>
        <begin position="1"/>
        <end position="46"/>
    </location>
</feature>
<feature type="chain" id="PRO_0000238942" description="Scavenger receptor cysteine-rich type 1 protein M130">
    <location>
        <begin position="47"/>
        <end position="1115"/>
    </location>
</feature>
<feature type="chain" id="PRO_0000238943" description="Soluble CD163">
    <location>
        <begin position="47"/>
        <end status="unknown"/>
    </location>
</feature>
<feature type="topological domain" description="Extracellular" evidence="3">
    <location>
        <begin position="47"/>
        <end position="1044"/>
    </location>
</feature>
<feature type="transmembrane region" description="Helical" evidence="3">
    <location>
        <begin position="1045"/>
        <end position="1065"/>
    </location>
</feature>
<feature type="topological domain" description="Cytoplasmic" evidence="3">
    <location>
        <begin position="1066"/>
        <end position="1115"/>
    </location>
</feature>
<feature type="domain" description="SRCR 1" evidence="4">
    <location>
        <begin position="51"/>
        <end position="151"/>
    </location>
</feature>
<feature type="domain" description="SRCR 2" evidence="4">
    <location>
        <begin position="158"/>
        <end position="258"/>
    </location>
</feature>
<feature type="domain" description="SRCR 3" evidence="4">
    <location>
        <begin position="265"/>
        <end position="365"/>
    </location>
</feature>
<feature type="domain" description="SRCR 4" evidence="4">
    <location>
        <begin position="372"/>
        <end position="472"/>
    </location>
</feature>
<feature type="domain" description="SRCR 5" evidence="4">
    <location>
        <begin position="477"/>
        <end position="577"/>
    </location>
</feature>
<feature type="domain" description="SRCR 6" evidence="4">
    <location>
        <begin position="582"/>
        <end position="682"/>
    </location>
</feature>
<feature type="domain" description="SRCR 7" evidence="4">
    <location>
        <begin position="718"/>
        <end position="818"/>
    </location>
</feature>
<feature type="domain" description="SRCR 8" evidence="4">
    <location>
        <begin position="823"/>
        <end position="925"/>
    </location>
</feature>
<feature type="domain" description="SRCR 9" evidence="4">
    <location>
        <begin position="928"/>
        <end position="1028"/>
    </location>
</feature>
<feature type="short sequence motif" description="Internalization signal">
    <location>
        <begin position="1090"/>
        <end position="1093"/>
    </location>
</feature>
<feature type="glycosylation site" description="N-linked (GlcNAc...) asparagine" evidence="3">
    <location>
        <position position="105"/>
    </location>
</feature>
<feature type="glycosylation site" description="N-linked (GlcNAc...) asparagine" evidence="3">
    <location>
        <position position="139"/>
    </location>
</feature>
<feature type="glycosylation site" description="N-linked (GlcNAc...) asparagine" evidence="3">
    <location>
        <position position="936"/>
    </location>
</feature>
<feature type="disulfide bond" evidence="4">
    <location>
        <begin position="76"/>
        <end position="140"/>
    </location>
</feature>
<feature type="disulfide bond" evidence="4">
    <location>
        <begin position="89"/>
        <end position="150"/>
    </location>
</feature>
<feature type="disulfide bond" evidence="4">
    <location>
        <begin position="120"/>
        <end position="130"/>
    </location>
</feature>
<feature type="disulfide bond" evidence="4">
    <location>
        <begin position="183"/>
        <end position="247"/>
    </location>
</feature>
<feature type="disulfide bond" evidence="4">
    <location>
        <begin position="196"/>
        <end position="257"/>
    </location>
</feature>
<feature type="disulfide bond" evidence="4">
    <location>
        <begin position="227"/>
        <end position="237"/>
    </location>
</feature>
<feature type="disulfide bond" evidence="4">
    <location>
        <begin position="290"/>
        <end position="354"/>
    </location>
</feature>
<feature type="disulfide bond" evidence="4">
    <location>
        <begin position="303"/>
        <end position="364"/>
    </location>
</feature>
<feature type="disulfide bond" evidence="4">
    <location>
        <begin position="334"/>
        <end position="344"/>
    </location>
</feature>
<feature type="disulfide bond" evidence="4">
    <location>
        <begin position="397"/>
        <end position="461"/>
    </location>
</feature>
<feature type="disulfide bond" evidence="4">
    <location>
        <begin position="410"/>
        <end position="471"/>
    </location>
</feature>
<feature type="disulfide bond" evidence="4">
    <location>
        <begin position="441"/>
        <end position="451"/>
    </location>
</feature>
<feature type="disulfide bond" evidence="4">
    <location>
        <begin position="502"/>
        <end position="566"/>
    </location>
</feature>
<feature type="disulfide bond" evidence="4">
    <location>
        <begin position="515"/>
        <end position="576"/>
    </location>
</feature>
<feature type="disulfide bond" evidence="4">
    <location>
        <begin position="546"/>
        <end position="556"/>
    </location>
</feature>
<feature type="disulfide bond" evidence="4">
    <location>
        <begin position="607"/>
        <end position="671"/>
    </location>
</feature>
<feature type="disulfide bond" evidence="4">
    <location>
        <begin position="620"/>
        <end position="681"/>
    </location>
</feature>
<feature type="disulfide bond" evidence="4">
    <location>
        <begin position="651"/>
        <end position="661"/>
    </location>
</feature>
<feature type="disulfide bond" evidence="4">
    <location>
        <begin position="743"/>
        <end position="807"/>
    </location>
</feature>
<feature type="disulfide bond" evidence="4">
    <location>
        <begin position="756"/>
        <end position="817"/>
    </location>
</feature>
<feature type="disulfide bond" evidence="4">
    <location>
        <begin position="787"/>
        <end position="797"/>
    </location>
</feature>
<feature type="disulfide bond" evidence="4">
    <location>
        <begin position="863"/>
        <end position="924"/>
    </location>
</feature>
<feature type="disulfide bond" evidence="4">
    <location>
        <begin position="894"/>
        <end position="904"/>
    </location>
</feature>
<feature type="disulfide bond" evidence="4">
    <location>
        <begin position="953"/>
        <end position="1017"/>
    </location>
</feature>
<feature type="disulfide bond" evidence="4">
    <location>
        <begin position="966"/>
        <end position="1027"/>
    </location>
</feature>
<feature type="disulfide bond" evidence="4">
    <location>
        <begin position="997"/>
        <end position="1007"/>
    </location>
</feature>
<feature type="splice variant" id="VSP_019017" description="In isoform 2." evidence="7">
    <location>
        <begin position="15"/>
        <end position="260"/>
    </location>
</feature>
<feature type="sequence conflict" description="In Ref. 2; CAC84397." evidence="8" ref="2">
    <original>HEN</original>
    <variation>LED</variation>
    <location>
        <begin position="9"/>
        <end position="11"/>
    </location>
</feature>
<feature type="sequence conflict" description="In Ref. 2; CAC84397." evidence="8" ref="2">
    <original>G</original>
    <variation>R</variation>
    <location>
        <position position="159"/>
    </location>
</feature>
<feature type="sequence conflict" description="In Ref. 2; CAC84397." evidence="8" ref="2">
    <original>G</original>
    <variation>E</variation>
    <location>
        <position position="177"/>
    </location>
</feature>
<feature type="sequence conflict" description="In Ref. 2; CAC84397." evidence="8" ref="2">
    <original>V</original>
    <variation>L</variation>
    <location>
        <position position="271"/>
    </location>
</feature>
<feature type="sequence conflict" description="In Ref. 1; AAZ50617 and 2; CAC84397." evidence="8" ref="1 2">
    <original>D</original>
    <variation>N</variation>
    <location>
        <position position="357"/>
    </location>
</feature>
<feature type="sequence conflict" description="In Ref. 2; CAC84397." evidence="8" ref="2">
    <original>N</original>
    <variation>S</variation>
    <location>
        <position position="708"/>
    </location>
</feature>
<feature type="sequence conflict" description="In Ref. 2; CAC84397." evidence="8" ref="2">
    <original>HEG</original>
    <variation>PGA</variation>
    <location>
        <begin position="735"/>
        <end position="737"/>
    </location>
</feature>
<feature type="sequence conflict" description="In Ref. 1; AAZ50617." evidence="8" ref="1">
    <original>R</original>
    <variation>K</variation>
    <location>
        <position position="851"/>
    </location>
</feature>
<feature type="sequence conflict" description="In Ref. 2; CAC84397." evidence="8" ref="2">
    <original>A</original>
    <variation>P</variation>
    <location>
        <position position="981"/>
    </location>
</feature>
<feature type="sequence conflict" description="In Ref. 2; CAC84397." evidence="8" ref="2">
    <original>T</original>
    <variation>P</variation>
    <location>
        <position position="1002"/>
    </location>
</feature>
<feature type="strand" evidence="9">
    <location>
        <begin position="478"/>
        <end position="481"/>
    </location>
</feature>
<feature type="strand" evidence="9">
    <location>
        <begin position="487"/>
        <end position="494"/>
    </location>
</feature>
<feature type="strand" evidence="9">
    <location>
        <begin position="497"/>
        <end position="500"/>
    </location>
</feature>
<feature type="helix" evidence="9">
    <location>
        <begin position="508"/>
        <end position="517"/>
    </location>
</feature>
<feature type="strand" evidence="9">
    <location>
        <begin position="522"/>
        <end position="527"/>
    </location>
</feature>
<feature type="turn" evidence="10">
    <location>
        <begin position="529"/>
        <end position="532"/>
    </location>
</feature>
<feature type="strand" evidence="9">
    <location>
        <begin position="537"/>
        <end position="539"/>
    </location>
</feature>
<feature type="strand" evidence="9">
    <location>
        <begin position="541"/>
        <end position="544"/>
    </location>
</feature>
<feature type="helix" evidence="9">
    <location>
        <begin position="553"/>
        <end position="555"/>
    </location>
</feature>
<feature type="strand" evidence="9">
    <location>
        <begin position="558"/>
        <end position="560"/>
    </location>
</feature>
<feature type="strand" evidence="9">
    <location>
        <begin position="562"/>
        <end position="564"/>
    </location>
</feature>
<feature type="helix" evidence="9">
    <location>
        <begin position="568"/>
        <end position="570"/>
    </location>
</feature>
<feature type="strand" evidence="9">
    <location>
        <begin position="573"/>
        <end position="576"/>
    </location>
</feature>
<feature type="strand" evidence="10">
    <location>
        <begin position="582"/>
        <end position="589"/>
    </location>
</feature>
<feature type="strand" evidence="10">
    <location>
        <begin position="592"/>
        <end position="599"/>
    </location>
</feature>
<feature type="strand" evidence="10">
    <location>
        <begin position="602"/>
        <end position="607"/>
    </location>
</feature>
<feature type="helix" evidence="10">
    <location>
        <begin position="608"/>
        <end position="610"/>
    </location>
</feature>
<feature type="helix" evidence="10">
    <location>
        <begin position="613"/>
        <end position="622"/>
    </location>
</feature>
<feature type="strand" evidence="10">
    <location>
        <begin position="628"/>
        <end position="630"/>
    </location>
</feature>
<feature type="strand" evidence="10">
    <location>
        <begin position="648"/>
        <end position="650"/>
    </location>
</feature>
<feature type="helix" evidence="10">
    <location>
        <begin position="658"/>
        <end position="660"/>
    </location>
</feature>
<feature type="strand" evidence="10">
    <location>
        <begin position="661"/>
        <end position="664"/>
    </location>
</feature>
<feature type="strand" evidence="10">
    <location>
        <begin position="678"/>
        <end position="681"/>
    </location>
</feature>
<feature type="strand" evidence="10">
    <location>
        <begin position="701"/>
        <end position="707"/>
    </location>
</feature>
<feature type="strand" evidence="10">
    <location>
        <begin position="710"/>
        <end position="713"/>
    </location>
</feature>
<feature type="strand" evidence="10">
    <location>
        <begin position="718"/>
        <end position="725"/>
    </location>
</feature>
<feature type="strand" evidence="10">
    <location>
        <begin position="728"/>
        <end position="735"/>
    </location>
</feature>
<feature type="strand" evidence="10">
    <location>
        <begin position="738"/>
        <end position="743"/>
    </location>
</feature>
<feature type="helix" evidence="10">
    <location>
        <begin position="749"/>
        <end position="758"/>
    </location>
</feature>
<feature type="strand" evidence="10">
    <location>
        <begin position="763"/>
        <end position="768"/>
    </location>
</feature>
<feature type="turn" evidence="10">
    <location>
        <begin position="770"/>
        <end position="773"/>
    </location>
</feature>
<feature type="strand" evidence="10">
    <location>
        <begin position="780"/>
        <end position="782"/>
    </location>
</feature>
<feature type="helix" evidence="10">
    <location>
        <begin position="794"/>
        <end position="796"/>
    </location>
</feature>
<feature type="helix" evidence="10">
    <location>
        <begin position="809"/>
        <end position="811"/>
    </location>
</feature>
<feature type="strand" evidence="10">
    <location>
        <begin position="814"/>
        <end position="817"/>
    </location>
</feature>
<feature type="strand" evidence="10">
    <location>
        <begin position="822"/>
        <end position="826"/>
    </location>
</feature>
<feature type="strand" evidence="10">
    <location>
        <begin position="833"/>
        <end position="842"/>
    </location>
</feature>
<feature type="strand" evidence="10">
    <location>
        <begin position="845"/>
        <end position="850"/>
    </location>
</feature>
<feature type="helix" evidence="10">
    <location>
        <begin position="856"/>
        <end position="865"/>
    </location>
</feature>
<feature type="strand" evidence="10">
    <location>
        <begin position="872"/>
        <end position="874"/>
    </location>
</feature>
<feature type="strand" evidence="10">
    <location>
        <begin position="885"/>
        <end position="889"/>
    </location>
</feature>
<feature type="helix" evidence="10">
    <location>
        <begin position="901"/>
        <end position="903"/>
    </location>
</feature>
<feature type="strand" evidence="10">
    <location>
        <begin position="912"/>
        <end position="914"/>
    </location>
</feature>
<feature type="turn" evidence="10">
    <location>
        <begin position="916"/>
        <end position="918"/>
    </location>
</feature>
<feature type="strand" evidence="10">
    <location>
        <begin position="921"/>
        <end position="924"/>
    </location>
</feature>
<feature type="strand" evidence="10">
    <location>
        <begin position="927"/>
        <end position="935"/>
    </location>
</feature>
<feature type="strand" evidence="10">
    <location>
        <begin position="938"/>
        <end position="945"/>
    </location>
</feature>
<feature type="strand" evidence="10">
    <location>
        <begin position="948"/>
        <end position="953"/>
    </location>
</feature>
<feature type="helix" evidence="10">
    <location>
        <begin position="959"/>
        <end position="969"/>
    </location>
</feature>
<feature type="strand" evidence="10">
    <location>
        <begin position="974"/>
        <end position="978"/>
    </location>
</feature>
<feature type="strand" evidence="10">
    <location>
        <begin position="990"/>
        <end position="994"/>
    </location>
</feature>
<feature type="helix" evidence="10">
    <location>
        <begin position="1004"/>
        <end position="1006"/>
    </location>
</feature>
<feature type="helix" evidence="10">
    <location>
        <begin position="1019"/>
        <end position="1021"/>
    </location>
</feature>
<feature type="strand" evidence="10">
    <location>
        <begin position="1024"/>
        <end position="1027"/>
    </location>
</feature>
<proteinExistence type="evidence at protein level"/>
<protein>
    <recommendedName>
        <fullName>Scavenger receptor cysteine-rich type 1 protein M130</fullName>
    </recommendedName>
    <cdAntigenName>CD163</cdAntigenName>
    <component>
        <recommendedName>
            <fullName>Soluble CD163</fullName>
            <shortName>sCD163</shortName>
        </recommendedName>
    </component>
</protein>
<comment type="function">
    <text evidence="1 5">Involved in clearance and endocytosis of hemoglobin/haptoglobin complexes by macrophages and may thereby protect tissues from free hemoglobin-mediated oxidative damage. May play a role in the uptake and recycling of iron, via endocytosis of hemoglobin/haptoglobin and subsequent breakdown of heme. Binds hemoglobin/haptoglobin complexes in a calcium-dependent and pH-dependent manner. Induces a cascade of intracellular signals that involves tyrosine kinase-dependent calcium mobilization, inositol triphosphate production and secretion of IL6 and CSF1 (By similarity). May play a role in the process of infection of porcine monocytes/macrophages by African swine fever virus (ASFV). In case of porcine reproductive and respiratory syndrome virus (PRRSV), serves mediates virion attachment and plays a role in viral entry.</text>
</comment>
<comment type="function">
    <text evidence="1">After shedding, the soluble form (sCD163) may play an anti-inflammatory role.</text>
</comment>
<comment type="subunit">
    <text evidence="1">Interacts with CSNK2B.</text>
</comment>
<comment type="subcellular location">
    <molecule>Soluble CD163</molecule>
    <subcellularLocation>
        <location evidence="2">Secreted</location>
    </subcellularLocation>
</comment>
<comment type="subcellular location">
    <subcellularLocation>
        <location evidence="2">Cell membrane</location>
        <topology evidence="2">Single-pass type I membrane protein</topology>
    </subcellularLocation>
</comment>
<comment type="alternative products">
    <event type="alternative splicing"/>
    <isoform>
        <id>Q2VL90-1</id>
        <name>1</name>
        <sequence type="displayed"/>
    </isoform>
    <isoform>
        <id>Q2VL90-2</id>
        <name>2</name>
        <name>CD163v3</name>
        <sequence type="described" ref="VSP_019017"/>
    </isoform>
</comment>
<comment type="tissue specificity">
    <text evidence="5">Expressed in monocytes and macrophages. Detected only in one population of monocytes (CD163+) which is in advanced maturation stage.</text>
</comment>
<comment type="induction">
    <text evidence="6">Suppressed when monocytes are differentiated towards dendritic cells by CSF1 and IL4.</text>
</comment>
<comment type="domain">
    <text evidence="1">The SRCR domain 3 mediates calcium-sensitive interaction with hemoglobin/haptoglobin complexes.</text>
</comment>
<comment type="PTM">
    <text evidence="1">A soluble form (sCD163) is produced by proteolytic shedding which can be induced by lipopolysaccharide, phorbol ester and Fc region of immunoglobulin gamma. This cleavage is dependent on protein kinase C and tyrosine kinases and can be blocked by protease inhibitors. The shedding is inhibited by the tissue inhibitor of metalloproteinase TIMP3, and thus probably induced by membrane-bound metalloproteinases ADAMs (By similarity).</text>
</comment>
<comment type="PTM">
    <text evidence="1">Phosphorylated.</text>
</comment>
<comment type="caution">
    <text evidence="8">It is uncertain whether Met-1 or Met-6 is the initiator.</text>
</comment>
<evidence type="ECO:0000250" key="1"/>
<evidence type="ECO:0000250" key="2">
    <source>
        <dbReference type="UniProtKB" id="Q86VB7"/>
    </source>
</evidence>
<evidence type="ECO:0000255" key="3"/>
<evidence type="ECO:0000255" key="4">
    <source>
        <dbReference type="PROSITE-ProRule" id="PRU00196"/>
    </source>
</evidence>
<evidence type="ECO:0000269" key="5">
    <source>
    </source>
</evidence>
<evidence type="ECO:0000269" key="6">
    <source>
    </source>
</evidence>
<evidence type="ECO:0000303" key="7">
    <source ref="1"/>
</evidence>
<evidence type="ECO:0000305" key="8"/>
<evidence type="ECO:0007829" key="9">
    <source>
        <dbReference type="PDB" id="5HRJ"/>
    </source>
</evidence>
<evidence type="ECO:0007829" key="10">
    <source>
        <dbReference type="PDB" id="8H7J"/>
    </source>
</evidence>